<protein>
    <recommendedName>
        <fullName evidence="1">Aspartate/glutamate leucyltransferase</fullName>
        <ecNumber evidence="1">2.3.2.29</ecNumber>
    </recommendedName>
</protein>
<name>BPT_XYLFA</name>
<proteinExistence type="inferred from homology"/>
<sequence>MAIDSKPHDDLQLFKTNLHPCGYWPDRWASDLVMDPNDPRLGAIYPQALAWGFRRSGNLLYRPHCEHCNACVPVRVNVNAFVPNRSQRRCLARNATLVTRIVPAERNAEQLSLYRRYLHQRHPDGGMDGHGAIEFDQFLIGPWGYGRFMEIREPATNGTPGQLLAVAVTDLTHQALSAVYTFYEPNAAARGLGTLAILHQIHWAQREQRPYLYLGYWIKDHFKMDYKRRFQKLEIYDGYRWRPFSTTYPTTHTL</sequence>
<comment type="function">
    <text evidence="1">Functions in the N-end rule pathway of protein degradation where it conjugates Leu from its aminoacyl-tRNA to the N-termini of proteins containing an N-terminal aspartate or glutamate.</text>
</comment>
<comment type="catalytic activity">
    <reaction evidence="1">
        <text>N-terminal L-glutamyl-[protein] + L-leucyl-tRNA(Leu) = N-terminal L-leucyl-L-glutamyl-[protein] + tRNA(Leu) + H(+)</text>
        <dbReference type="Rhea" id="RHEA:50412"/>
        <dbReference type="Rhea" id="RHEA-COMP:9613"/>
        <dbReference type="Rhea" id="RHEA-COMP:9622"/>
        <dbReference type="Rhea" id="RHEA-COMP:12664"/>
        <dbReference type="Rhea" id="RHEA-COMP:12668"/>
        <dbReference type="ChEBI" id="CHEBI:15378"/>
        <dbReference type="ChEBI" id="CHEBI:64721"/>
        <dbReference type="ChEBI" id="CHEBI:78442"/>
        <dbReference type="ChEBI" id="CHEBI:78494"/>
        <dbReference type="ChEBI" id="CHEBI:133041"/>
        <dbReference type="EC" id="2.3.2.29"/>
    </reaction>
</comment>
<comment type="catalytic activity">
    <reaction evidence="1">
        <text>N-terminal L-aspartyl-[protein] + L-leucyl-tRNA(Leu) = N-terminal L-leucyl-L-aspartyl-[protein] + tRNA(Leu) + H(+)</text>
        <dbReference type="Rhea" id="RHEA:50420"/>
        <dbReference type="Rhea" id="RHEA-COMP:9613"/>
        <dbReference type="Rhea" id="RHEA-COMP:9622"/>
        <dbReference type="Rhea" id="RHEA-COMP:12669"/>
        <dbReference type="Rhea" id="RHEA-COMP:12674"/>
        <dbReference type="ChEBI" id="CHEBI:15378"/>
        <dbReference type="ChEBI" id="CHEBI:64720"/>
        <dbReference type="ChEBI" id="CHEBI:78442"/>
        <dbReference type="ChEBI" id="CHEBI:78494"/>
        <dbReference type="ChEBI" id="CHEBI:133042"/>
        <dbReference type="EC" id="2.3.2.29"/>
    </reaction>
</comment>
<comment type="subcellular location">
    <subcellularLocation>
        <location evidence="1">Cytoplasm</location>
    </subcellularLocation>
</comment>
<comment type="similarity">
    <text evidence="1">Belongs to the R-transferase family. Bpt subfamily.</text>
</comment>
<reference key="1">
    <citation type="journal article" date="2000" name="Nature">
        <title>The genome sequence of the plant pathogen Xylella fastidiosa.</title>
        <authorList>
            <person name="Simpson A.J.G."/>
            <person name="Reinach F.C."/>
            <person name="Arruda P."/>
            <person name="Abreu F.A."/>
            <person name="Acencio M."/>
            <person name="Alvarenga R."/>
            <person name="Alves L.M.C."/>
            <person name="Araya J.E."/>
            <person name="Baia G.S."/>
            <person name="Baptista C.S."/>
            <person name="Barros M.H."/>
            <person name="Bonaccorsi E.D."/>
            <person name="Bordin S."/>
            <person name="Bove J.M."/>
            <person name="Briones M.R.S."/>
            <person name="Bueno M.R.P."/>
            <person name="Camargo A.A."/>
            <person name="Camargo L.E.A."/>
            <person name="Carraro D.M."/>
            <person name="Carrer H."/>
            <person name="Colauto N.B."/>
            <person name="Colombo C."/>
            <person name="Costa F.F."/>
            <person name="Costa M.C.R."/>
            <person name="Costa-Neto C.M."/>
            <person name="Coutinho L.L."/>
            <person name="Cristofani M."/>
            <person name="Dias-Neto E."/>
            <person name="Docena C."/>
            <person name="El-Dorry H."/>
            <person name="Facincani A.P."/>
            <person name="Ferreira A.J.S."/>
            <person name="Ferreira V.C.A."/>
            <person name="Ferro J.A."/>
            <person name="Fraga J.S."/>
            <person name="Franca S.C."/>
            <person name="Franco M.C."/>
            <person name="Frohme M."/>
            <person name="Furlan L.R."/>
            <person name="Garnier M."/>
            <person name="Goldman G.H."/>
            <person name="Goldman M.H.S."/>
            <person name="Gomes S.L."/>
            <person name="Gruber A."/>
            <person name="Ho P.L."/>
            <person name="Hoheisel J.D."/>
            <person name="Junqueira M.L."/>
            <person name="Kemper E.L."/>
            <person name="Kitajima J.P."/>
            <person name="Krieger J.E."/>
            <person name="Kuramae E.E."/>
            <person name="Laigret F."/>
            <person name="Lambais M.R."/>
            <person name="Leite L.C.C."/>
            <person name="Lemos E.G.M."/>
            <person name="Lemos M.V.F."/>
            <person name="Lopes S.A."/>
            <person name="Lopes C.R."/>
            <person name="Machado J.A."/>
            <person name="Machado M.A."/>
            <person name="Madeira A.M.B.N."/>
            <person name="Madeira H.M.F."/>
            <person name="Marino C.L."/>
            <person name="Marques M.V."/>
            <person name="Martins E.A.L."/>
            <person name="Martins E.M.F."/>
            <person name="Matsukuma A.Y."/>
            <person name="Menck C.F.M."/>
            <person name="Miracca E.C."/>
            <person name="Miyaki C.Y."/>
            <person name="Monteiro-Vitorello C.B."/>
            <person name="Moon D.H."/>
            <person name="Nagai M.A."/>
            <person name="Nascimento A.L.T.O."/>
            <person name="Netto L.E.S."/>
            <person name="Nhani A. Jr."/>
            <person name="Nobrega F.G."/>
            <person name="Nunes L.R."/>
            <person name="Oliveira M.A."/>
            <person name="de Oliveira M.C."/>
            <person name="de Oliveira R.C."/>
            <person name="Palmieri D.A."/>
            <person name="Paris A."/>
            <person name="Peixoto B.R."/>
            <person name="Pereira G.A.G."/>
            <person name="Pereira H.A. Jr."/>
            <person name="Pesquero J.B."/>
            <person name="Quaggio R.B."/>
            <person name="Roberto P.G."/>
            <person name="Rodrigues V."/>
            <person name="de Rosa A.J.M."/>
            <person name="de Rosa V.E. Jr."/>
            <person name="de Sa R.G."/>
            <person name="Santelli R.V."/>
            <person name="Sawasaki H.E."/>
            <person name="da Silva A.C.R."/>
            <person name="da Silva A.M."/>
            <person name="da Silva F.R."/>
            <person name="Silva W.A. Jr."/>
            <person name="da Silveira J.F."/>
            <person name="Silvestri M.L.Z."/>
            <person name="Siqueira W.J."/>
            <person name="de Souza A.A."/>
            <person name="de Souza A.P."/>
            <person name="Terenzi M.F."/>
            <person name="Truffi D."/>
            <person name="Tsai S.M."/>
            <person name="Tsuhako M.H."/>
            <person name="Vallada H."/>
            <person name="Van Sluys M.A."/>
            <person name="Verjovski-Almeida S."/>
            <person name="Vettore A.L."/>
            <person name="Zago M.A."/>
            <person name="Zatz M."/>
            <person name="Meidanis J."/>
            <person name="Setubal J.C."/>
        </authorList>
    </citation>
    <scope>NUCLEOTIDE SEQUENCE [LARGE SCALE GENOMIC DNA]</scope>
    <source>
        <strain>9a5c</strain>
    </source>
</reference>
<feature type="chain" id="PRO_0000195122" description="Aspartate/glutamate leucyltransferase">
    <location>
        <begin position="1"/>
        <end position="254"/>
    </location>
</feature>
<organism>
    <name type="scientific">Xylella fastidiosa (strain 9a5c)</name>
    <dbReference type="NCBI Taxonomy" id="160492"/>
    <lineage>
        <taxon>Bacteria</taxon>
        <taxon>Pseudomonadati</taxon>
        <taxon>Pseudomonadota</taxon>
        <taxon>Gammaproteobacteria</taxon>
        <taxon>Lysobacterales</taxon>
        <taxon>Lysobacteraceae</taxon>
        <taxon>Xylella</taxon>
    </lineage>
</organism>
<accession>Q9PEL0</accession>
<evidence type="ECO:0000255" key="1">
    <source>
        <dbReference type="HAMAP-Rule" id="MF_00689"/>
    </source>
</evidence>
<dbReference type="EC" id="2.3.2.29" evidence="1"/>
<dbReference type="EMBL" id="AE003849">
    <property type="protein sequence ID" value="AAF83828.1"/>
    <property type="molecule type" value="Genomic_DNA"/>
</dbReference>
<dbReference type="PIR" id="F82733">
    <property type="entry name" value="F82733"/>
</dbReference>
<dbReference type="RefSeq" id="WP_010893537.1">
    <property type="nucleotide sequence ID" value="NC_002488.3"/>
</dbReference>
<dbReference type="SMR" id="Q9PEL0"/>
<dbReference type="STRING" id="160492.XF_1018"/>
<dbReference type="KEGG" id="xfa:XF_1018"/>
<dbReference type="eggNOG" id="COG2935">
    <property type="taxonomic scope" value="Bacteria"/>
</dbReference>
<dbReference type="HOGENOM" id="CLU_077607_0_0_6"/>
<dbReference type="Proteomes" id="UP000000812">
    <property type="component" value="Chromosome"/>
</dbReference>
<dbReference type="GO" id="GO:0005737">
    <property type="term" value="C:cytoplasm"/>
    <property type="evidence" value="ECO:0007669"/>
    <property type="project" value="UniProtKB-SubCell"/>
</dbReference>
<dbReference type="GO" id="GO:0004057">
    <property type="term" value="F:arginyl-tRNA--protein transferase activity"/>
    <property type="evidence" value="ECO:0007669"/>
    <property type="project" value="InterPro"/>
</dbReference>
<dbReference type="GO" id="GO:0008914">
    <property type="term" value="F:leucyl-tRNA--protein transferase activity"/>
    <property type="evidence" value="ECO:0007669"/>
    <property type="project" value="UniProtKB-UniRule"/>
</dbReference>
<dbReference type="GO" id="GO:0071596">
    <property type="term" value="P:ubiquitin-dependent protein catabolic process via the N-end rule pathway"/>
    <property type="evidence" value="ECO:0007669"/>
    <property type="project" value="InterPro"/>
</dbReference>
<dbReference type="HAMAP" id="MF_00689">
    <property type="entry name" value="Bpt"/>
    <property type="match status" value="1"/>
</dbReference>
<dbReference type="InterPro" id="IPR016181">
    <property type="entry name" value="Acyl_CoA_acyltransferase"/>
</dbReference>
<dbReference type="InterPro" id="IPR017138">
    <property type="entry name" value="Asp_Glu_LeuTrfase"/>
</dbReference>
<dbReference type="InterPro" id="IPR030700">
    <property type="entry name" value="N-end_Aminoacyl_Trfase"/>
</dbReference>
<dbReference type="InterPro" id="IPR007472">
    <property type="entry name" value="N-end_Aminoacyl_Trfase_C"/>
</dbReference>
<dbReference type="InterPro" id="IPR007471">
    <property type="entry name" value="N-end_Aminoacyl_Trfase_N"/>
</dbReference>
<dbReference type="NCBIfam" id="NF002341">
    <property type="entry name" value="PRK01305.1-1"/>
    <property type="match status" value="1"/>
</dbReference>
<dbReference type="NCBIfam" id="NF002342">
    <property type="entry name" value="PRK01305.1-3"/>
    <property type="match status" value="1"/>
</dbReference>
<dbReference type="NCBIfam" id="NF002346">
    <property type="entry name" value="PRK01305.2-3"/>
    <property type="match status" value="1"/>
</dbReference>
<dbReference type="PANTHER" id="PTHR21367">
    <property type="entry name" value="ARGININE-TRNA-PROTEIN TRANSFERASE 1"/>
    <property type="match status" value="1"/>
</dbReference>
<dbReference type="PANTHER" id="PTHR21367:SF1">
    <property type="entry name" value="ARGINYL-TRNA--PROTEIN TRANSFERASE 1"/>
    <property type="match status" value="1"/>
</dbReference>
<dbReference type="Pfam" id="PF04377">
    <property type="entry name" value="ATE_C"/>
    <property type="match status" value="1"/>
</dbReference>
<dbReference type="Pfam" id="PF04376">
    <property type="entry name" value="ATE_N"/>
    <property type="match status" value="1"/>
</dbReference>
<dbReference type="PIRSF" id="PIRSF037208">
    <property type="entry name" value="ATE_pro_prd"/>
    <property type="match status" value="1"/>
</dbReference>
<dbReference type="SUPFAM" id="SSF55729">
    <property type="entry name" value="Acyl-CoA N-acyltransferases (Nat)"/>
    <property type="match status" value="1"/>
</dbReference>
<gene>
    <name evidence="1" type="primary">bpt</name>
    <name type="ordered locus">XF_1018</name>
</gene>
<keyword id="KW-0012">Acyltransferase</keyword>
<keyword id="KW-0963">Cytoplasm</keyword>
<keyword id="KW-0808">Transferase</keyword>